<protein>
    <recommendedName>
        <fullName evidence="2">Large ribosomal subunit protein bL35</fullName>
    </recommendedName>
    <alternativeName>
        <fullName evidence="4">50S ribosomal protein L35</fullName>
    </alternativeName>
</protein>
<name>RL35_GEOSE</name>
<evidence type="ECO:0000250" key="1"/>
<evidence type="ECO:0000255" key="2">
    <source>
        <dbReference type="HAMAP-Rule" id="MF_00514"/>
    </source>
</evidence>
<evidence type="ECO:0000256" key="3">
    <source>
        <dbReference type="SAM" id="MobiDB-lite"/>
    </source>
</evidence>
<evidence type="ECO:0000305" key="4"/>
<organism>
    <name type="scientific">Geobacillus stearothermophilus</name>
    <name type="common">Bacillus stearothermophilus</name>
    <dbReference type="NCBI Taxonomy" id="1422"/>
    <lineage>
        <taxon>Bacteria</taxon>
        <taxon>Bacillati</taxon>
        <taxon>Bacillota</taxon>
        <taxon>Bacilli</taxon>
        <taxon>Bacillales</taxon>
        <taxon>Anoxybacillaceae</taxon>
        <taxon>Geobacillus</taxon>
    </lineage>
</organism>
<feature type="initiator methionine" description="Removed" evidence="1">
    <location>
        <position position="1"/>
    </location>
</feature>
<feature type="chain" id="PRO_0000177325" description="Large ribosomal subunit protein bL35">
    <location>
        <begin position="2"/>
        <end position="66"/>
    </location>
</feature>
<feature type="region of interest" description="Disordered" evidence="3">
    <location>
        <begin position="1"/>
        <end position="29"/>
    </location>
</feature>
<feature type="compositionally biased region" description="Basic residues" evidence="3">
    <location>
        <begin position="1"/>
        <end position="26"/>
    </location>
</feature>
<sequence length="66" mass="7690">MPKMKTHRGSAKRFKKTASGKLKRGHAYTSHLFANKTKKQKRHLRKATLVSPGDFKRIRQMLDNLK</sequence>
<dbReference type="EMBL" id="X16188">
    <property type="protein sequence ID" value="CAA34313.1"/>
    <property type="molecule type" value="Genomic_DNA"/>
</dbReference>
<dbReference type="PIR" id="S05347">
    <property type="entry name" value="R5BS35"/>
</dbReference>
<dbReference type="RefSeq" id="WP_011232191.1">
    <property type="nucleotide sequence ID" value="NZ_RCTK01000004.1"/>
</dbReference>
<dbReference type="SMR" id="P13069"/>
<dbReference type="GeneID" id="89612078"/>
<dbReference type="OrthoDB" id="47476at2"/>
<dbReference type="GO" id="GO:0022625">
    <property type="term" value="C:cytosolic large ribosomal subunit"/>
    <property type="evidence" value="ECO:0007669"/>
    <property type="project" value="TreeGrafter"/>
</dbReference>
<dbReference type="GO" id="GO:0003735">
    <property type="term" value="F:structural constituent of ribosome"/>
    <property type="evidence" value="ECO:0007669"/>
    <property type="project" value="InterPro"/>
</dbReference>
<dbReference type="GO" id="GO:0006412">
    <property type="term" value="P:translation"/>
    <property type="evidence" value="ECO:0007669"/>
    <property type="project" value="UniProtKB-UniRule"/>
</dbReference>
<dbReference type="FunFam" id="4.10.410.60:FF:000001">
    <property type="entry name" value="50S ribosomal protein L35"/>
    <property type="match status" value="1"/>
</dbReference>
<dbReference type="Gene3D" id="4.10.410.60">
    <property type="match status" value="1"/>
</dbReference>
<dbReference type="HAMAP" id="MF_00514">
    <property type="entry name" value="Ribosomal_bL35"/>
    <property type="match status" value="1"/>
</dbReference>
<dbReference type="InterPro" id="IPR001706">
    <property type="entry name" value="Ribosomal_bL35"/>
</dbReference>
<dbReference type="InterPro" id="IPR021137">
    <property type="entry name" value="Ribosomal_bL35-like"/>
</dbReference>
<dbReference type="InterPro" id="IPR018265">
    <property type="entry name" value="Ribosomal_bL35_CS"/>
</dbReference>
<dbReference type="InterPro" id="IPR037229">
    <property type="entry name" value="Ribosomal_bL35_sf"/>
</dbReference>
<dbReference type="NCBIfam" id="TIGR00001">
    <property type="entry name" value="rpmI_bact"/>
    <property type="match status" value="1"/>
</dbReference>
<dbReference type="PANTHER" id="PTHR33343">
    <property type="entry name" value="54S RIBOSOMAL PROTEIN BL35M"/>
    <property type="match status" value="1"/>
</dbReference>
<dbReference type="PANTHER" id="PTHR33343:SF1">
    <property type="entry name" value="LARGE RIBOSOMAL SUBUNIT PROTEIN BL35M"/>
    <property type="match status" value="1"/>
</dbReference>
<dbReference type="Pfam" id="PF01632">
    <property type="entry name" value="Ribosomal_L35p"/>
    <property type="match status" value="1"/>
</dbReference>
<dbReference type="PRINTS" id="PR00064">
    <property type="entry name" value="RIBOSOMALL35"/>
</dbReference>
<dbReference type="SUPFAM" id="SSF143034">
    <property type="entry name" value="L35p-like"/>
    <property type="match status" value="1"/>
</dbReference>
<dbReference type="PROSITE" id="PS00936">
    <property type="entry name" value="RIBOSOMAL_L35"/>
    <property type="match status" value="1"/>
</dbReference>
<accession>P13069</accession>
<keyword id="KW-0687">Ribonucleoprotein</keyword>
<keyword id="KW-0689">Ribosomal protein</keyword>
<reference key="1">
    <citation type="journal article" date="1989" name="Mol. Gen. Genet.">
        <title>Cloning and characterization of a gene cluster from Bacillus stearothermophilus comprising infC, rpmI and rplT.</title>
        <authorList>
            <person name="Pon C.L."/>
            <person name="Brombach M."/>
            <person name="Thamm S."/>
            <person name="Gualerzi C.O."/>
        </authorList>
    </citation>
    <scope>NUCLEOTIDE SEQUENCE [GENOMIC DNA]</scope>
</reference>
<proteinExistence type="inferred from homology"/>
<gene>
    <name evidence="2" type="primary">rpmI</name>
</gene>
<comment type="similarity">
    <text evidence="2">Belongs to the bacterial ribosomal protein bL35 family.</text>
</comment>